<proteinExistence type="inferred from homology"/>
<accession>Q65HX1</accession>
<accession>Q62TC0</accession>
<dbReference type="EMBL" id="CP000002">
    <property type="protein sequence ID" value="AAU23989.1"/>
    <property type="molecule type" value="Genomic_DNA"/>
</dbReference>
<dbReference type="EMBL" id="AE017333">
    <property type="protein sequence ID" value="AAU41343.1"/>
    <property type="molecule type" value="Genomic_DNA"/>
</dbReference>
<dbReference type="RefSeq" id="WP_009327962.1">
    <property type="nucleotide sequence ID" value="NC_006322.1"/>
</dbReference>
<dbReference type="SMR" id="Q65HX1"/>
<dbReference type="STRING" id="279010.BL01886"/>
<dbReference type="KEGG" id="bld:BLi02468"/>
<dbReference type="KEGG" id="bli:BL01886"/>
<dbReference type="eggNOG" id="COG1354">
    <property type="taxonomic scope" value="Bacteria"/>
</dbReference>
<dbReference type="HOGENOM" id="CLU_038686_3_1_9"/>
<dbReference type="Proteomes" id="UP000000606">
    <property type="component" value="Chromosome"/>
</dbReference>
<dbReference type="GO" id="GO:0005737">
    <property type="term" value="C:cytoplasm"/>
    <property type="evidence" value="ECO:0007669"/>
    <property type="project" value="UniProtKB-SubCell"/>
</dbReference>
<dbReference type="GO" id="GO:0051301">
    <property type="term" value="P:cell division"/>
    <property type="evidence" value="ECO:0007669"/>
    <property type="project" value="UniProtKB-KW"/>
</dbReference>
<dbReference type="GO" id="GO:0007059">
    <property type="term" value="P:chromosome segregation"/>
    <property type="evidence" value="ECO:0007669"/>
    <property type="project" value="UniProtKB-UniRule"/>
</dbReference>
<dbReference type="GO" id="GO:0006260">
    <property type="term" value="P:DNA replication"/>
    <property type="evidence" value="ECO:0007669"/>
    <property type="project" value="UniProtKB-UniRule"/>
</dbReference>
<dbReference type="Gene3D" id="6.10.250.2410">
    <property type="match status" value="1"/>
</dbReference>
<dbReference type="Gene3D" id="1.10.10.580">
    <property type="entry name" value="Structural maintenance of chromosome 1. Chain E"/>
    <property type="match status" value="1"/>
</dbReference>
<dbReference type="HAMAP" id="MF_01805">
    <property type="entry name" value="ScpA"/>
    <property type="match status" value="1"/>
</dbReference>
<dbReference type="InterPro" id="IPR003768">
    <property type="entry name" value="ScpA"/>
</dbReference>
<dbReference type="InterPro" id="IPR023093">
    <property type="entry name" value="ScpA-like_C"/>
</dbReference>
<dbReference type="NCBIfam" id="NF000994">
    <property type="entry name" value="PRK00104.1-3"/>
    <property type="match status" value="1"/>
</dbReference>
<dbReference type="NCBIfam" id="NF000995">
    <property type="entry name" value="PRK00104.1-4"/>
    <property type="match status" value="1"/>
</dbReference>
<dbReference type="PANTHER" id="PTHR33969">
    <property type="entry name" value="SEGREGATION AND CONDENSATION PROTEIN A"/>
    <property type="match status" value="1"/>
</dbReference>
<dbReference type="PANTHER" id="PTHR33969:SF2">
    <property type="entry name" value="SEGREGATION AND CONDENSATION PROTEIN A"/>
    <property type="match status" value="1"/>
</dbReference>
<dbReference type="Pfam" id="PF02616">
    <property type="entry name" value="SMC_ScpA"/>
    <property type="match status" value="1"/>
</dbReference>
<keyword id="KW-0131">Cell cycle</keyword>
<keyword id="KW-0132">Cell division</keyword>
<keyword id="KW-0159">Chromosome partition</keyword>
<keyword id="KW-0963">Cytoplasm</keyword>
<keyword id="KW-1185">Reference proteome</keyword>
<sequence length="251" mass="29773">MEYQVKIEAFEGPLDLLLHLINRLEIDIYDIPVAKITEQYLLYVHTMRELELDVASEYLVMAATLLSIKSRMLLPKQEEELFDEEFLEEEEDPREELIEKLIEYRKYKSAAQNLKEREEERQKAFAKPPSDLSDYAKEIKLSEQKLSVTVYDMLGAFQKVLNRKKINRPSETRISRQEIPIEERMTQIVDCLKSSRKRMHFMELFPYEQKEHLVVTFLAILELMKNQLIIIEQEHNFSDIYITGSEAIHDA</sequence>
<evidence type="ECO:0000255" key="1">
    <source>
        <dbReference type="HAMAP-Rule" id="MF_01805"/>
    </source>
</evidence>
<name>SCPA_BACLD</name>
<comment type="function">
    <text evidence="1">Participates in chromosomal partition during cell division. May act via the formation of a condensin-like complex containing Smc and ScpB that pull DNA away from mid-cell into both cell halves.</text>
</comment>
<comment type="subunit">
    <text evidence="1">Component of a cohesin-like complex composed of ScpA, ScpB and the Smc homodimer, in which ScpA and ScpB bind to the head domain of Smc. The presence of the three proteins is required for the association of the complex with DNA.</text>
</comment>
<comment type="subcellular location">
    <subcellularLocation>
        <location evidence="1">Cytoplasm</location>
    </subcellularLocation>
    <text evidence="1">Associated with two foci at the outer edges of the nucleoid region in young cells, and at four foci within both cell halves in older cells.</text>
</comment>
<comment type="similarity">
    <text evidence="1">Belongs to the ScpA family.</text>
</comment>
<organism>
    <name type="scientific">Bacillus licheniformis (strain ATCC 14580 / DSM 13 / JCM 2505 / CCUG 7422 / NBRC 12200 / NCIMB 9375 / NCTC 10341 / NRRL NRS-1264 / Gibson 46)</name>
    <dbReference type="NCBI Taxonomy" id="279010"/>
    <lineage>
        <taxon>Bacteria</taxon>
        <taxon>Bacillati</taxon>
        <taxon>Bacillota</taxon>
        <taxon>Bacilli</taxon>
        <taxon>Bacillales</taxon>
        <taxon>Bacillaceae</taxon>
        <taxon>Bacillus</taxon>
    </lineage>
</organism>
<reference key="1">
    <citation type="journal article" date="2004" name="J. Mol. Microbiol. Biotechnol.">
        <title>The complete genome sequence of Bacillus licheniformis DSM13, an organism with great industrial potential.</title>
        <authorList>
            <person name="Veith B."/>
            <person name="Herzberg C."/>
            <person name="Steckel S."/>
            <person name="Feesche J."/>
            <person name="Maurer K.H."/>
            <person name="Ehrenreich P."/>
            <person name="Baeumer S."/>
            <person name="Henne A."/>
            <person name="Liesegang H."/>
            <person name="Merkl R."/>
            <person name="Ehrenreich A."/>
            <person name="Gottschalk G."/>
        </authorList>
    </citation>
    <scope>NUCLEOTIDE SEQUENCE [LARGE SCALE GENOMIC DNA]</scope>
    <source>
        <strain>ATCC 14580 / DSM 13 / JCM 2505 / CCUG 7422 / NBRC 12200 / NCIMB 9375 / NCTC 10341 / NRRL NRS-1264 / Gibson 46</strain>
    </source>
</reference>
<reference key="2">
    <citation type="journal article" date="2004" name="Genome Biol.">
        <title>Complete genome sequence of the industrial bacterium Bacillus licheniformis and comparisons with closely related Bacillus species.</title>
        <authorList>
            <person name="Rey M.W."/>
            <person name="Ramaiya P."/>
            <person name="Nelson B.A."/>
            <person name="Brody-Karpin S.D."/>
            <person name="Zaretsky E.J."/>
            <person name="Tang M."/>
            <person name="Lopez de Leon A."/>
            <person name="Xiang H."/>
            <person name="Gusti V."/>
            <person name="Clausen I.G."/>
            <person name="Olsen P.B."/>
            <person name="Rasmussen M.D."/>
            <person name="Andersen J.T."/>
            <person name="Joergensen P.L."/>
            <person name="Larsen T.S."/>
            <person name="Sorokin A."/>
            <person name="Bolotin A."/>
            <person name="Lapidus A."/>
            <person name="Galleron N."/>
            <person name="Ehrlich S.D."/>
            <person name="Berka R.M."/>
        </authorList>
    </citation>
    <scope>NUCLEOTIDE SEQUENCE [LARGE SCALE GENOMIC DNA]</scope>
    <source>
        <strain>ATCC 14580 / DSM 13 / JCM 2505 / CCUG 7422 / NBRC 12200 / NCIMB 9375 / NCTC 10341 / NRRL NRS-1264 / Gibson 46</strain>
    </source>
</reference>
<protein>
    <recommendedName>
        <fullName evidence="1">Segregation and condensation protein A</fullName>
    </recommendedName>
</protein>
<gene>
    <name evidence="1" type="primary">scpA</name>
    <name type="ordered locus">BLi02468</name>
    <name type="ordered locus">BL01886</name>
</gene>
<feature type="chain" id="PRO_1000069967" description="Segregation and condensation protein A">
    <location>
        <begin position="1"/>
        <end position="251"/>
    </location>
</feature>